<comment type="function">
    <text evidence="1">The UvrABC repair system catalyzes the recognition and processing of DNA lesions. UvrC both incises the 5' and 3' sides of the lesion. The N-terminal half is responsible for the 3' incision and the C-terminal half is responsible for the 5' incision.</text>
</comment>
<comment type="subunit">
    <text evidence="1">Interacts with UvrB in an incision complex.</text>
</comment>
<comment type="subcellular location">
    <subcellularLocation>
        <location evidence="1">Cytoplasm</location>
    </subcellularLocation>
</comment>
<comment type="similarity">
    <text evidence="1">Belongs to the UvrC family.</text>
</comment>
<protein>
    <recommendedName>
        <fullName evidence="1">UvrABC system protein C</fullName>
        <shortName evidence="1">Protein UvrC</shortName>
    </recommendedName>
    <alternativeName>
        <fullName evidence="1">Excinuclease ABC subunit C</fullName>
    </alternativeName>
</protein>
<accession>Q6G041</accession>
<keyword id="KW-0963">Cytoplasm</keyword>
<keyword id="KW-0227">DNA damage</keyword>
<keyword id="KW-0228">DNA excision</keyword>
<keyword id="KW-0234">DNA repair</keyword>
<keyword id="KW-0267">Excision nuclease</keyword>
<keyword id="KW-0742">SOS response</keyword>
<proteinExistence type="inferred from homology"/>
<organism>
    <name type="scientific">Bartonella quintana (strain Toulouse)</name>
    <name type="common">Rochalimaea quintana</name>
    <dbReference type="NCBI Taxonomy" id="283165"/>
    <lineage>
        <taxon>Bacteria</taxon>
        <taxon>Pseudomonadati</taxon>
        <taxon>Pseudomonadota</taxon>
        <taxon>Alphaproteobacteria</taxon>
        <taxon>Hyphomicrobiales</taxon>
        <taxon>Bartonellaceae</taxon>
        <taxon>Bartonella</taxon>
    </lineage>
</organism>
<reference key="1">
    <citation type="journal article" date="2004" name="Proc. Natl. Acad. Sci. U.S.A.">
        <title>The louse-borne human pathogen Bartonella quintana is a genomic derivative of the zoonotic agent Bartonella henselae.</title>
        <authorList>
            <person name="Alsmark U.C.M."/>
            <person name="Frank A.C."/>
            <person name="Karlberg E.O."/>
            <person name="Legault B.-A."/>
            <person name="Ardell D.H."/>
            <person name="Canbaeck B."/>
            <person name="Eriksson A.-S."/>
            <person name="Naeslund A.K."/>
            <person name="Handley S.A."/>
            <person name="Huvet M."/>
            <person name="La Scola B."/>
            <person name="Holmberg M."/>
            <person name="Andersson S.G.E."/>
        </authorList>
    </citation>
    <scope>NUCLEOTIDE SEQUENCE [LARGE SCALE GENOMIC DNA]</scope>
    <source>
        <strain>Toulouse</strain>
    </source>
</reference>
<dbReference type="EMBL" id="BX897700">
    <property type="protein sequence ID" value="CAF25970.1"/>
    <property type="molecule type" value="Genomic_DNA"/>
</dbReference>
<dbReference type="RefSeq" id="WP_011179257.1">
    <property type="nucleotide sequence ID" value="NC_005955.1"/>
</dbReference>
<dbReference type="SMR" id="Q6G041"/>
<dbReference type="KEGG" id="bqu:BQ04710"/>
<dbReference type="eggNOG" id="COG0322">
    <property type="taxonomic scope" value="Bacteria"/>
</dbReference>
<dbReference type="HOGENOM" id="CLU_014841_3_0_5"/>
<dbReference type="OrthoDB" id="9804933at2"/>
<dbReference type="Proteomes" id="UP000000597">
    <property type="component" value="Chromosome"/>
</dbReference>
<dbReference type="GO" id="GO:0005737">
    <property type="term" value="C:cytoplasm"/>
    <property type="evidence" value="ECO:0007669"/>
    <property type="project" value="UniProtKB-SubCell"/>
</dbReference>
<dbReference type="GO" id="GO:0009380">
    <property type="term" value="C:excinuclease repair complex"/>
    <property type="evidence" value="ECO:0007669"/>
    <property type="project" value="InterPro"/>
</dbReference>
<dbReference type="GO" id="GO:0003677">
    <property type="term" value="F:DNA binding"/>
    <property type="evidence" value="ECO:0007669"/>
    <property type="project" value="UniProtKB-UniRule"/>
</dbReference>
<dbReference type="GO" id="GO:0009381">
    <property type="term" value="F:excinuclease ABC activity"/>
    <property type="evidence" value="ECO:0007669"/>
    <property type="project" value="UniProtKB-UniRule"/>
</dbReference>
<dbReference type="GO" id="GO:0006289">
    <property type="term" value="P:nucleotide-excision repair"/>
    <property type="evidence" value="ECO:0007669"/>
    <property type="project" value="UniProtKB-UniRule"/>
</dbReference>
<dbReference type="GO" id="GO:0009432">
    <property type="term" value="P:SOS response"/>
    <property type="evidence" value="ECO:0007669"/>
    <property type="project" value="UniProtKB-UniRule"/>
</dbReference>
<dbReference type="CDD" id="cd10434">
    <property type="entry name" value="GIY-YIG_UvrC_Cho"/>
    <property type="match status" value="1"/>
</dbReference>
<dbReference type="FunFam" id="3.30.420.340:FF:000001">
    <property type="entry name" value="UvrABC system protein C"/>
    <property type="match status" value="1"/>
</dbReference>
<dbReference type="FunFam" id="3.40.1440.10:FF:000001">
    <property type="entry name" value="UvrABC system protein C"/>
    <property type="match status" value="1"/>
</dbReference>
<dbReference type="Gene3D" id="1.10.150.20">
    <property type="entry name" value="5' to 3' exonuclease, C-terminal subdomain"/>
    <property type="match status" value="1"/>
</dbReference>
<dbReference type="Gene3D" id="3.40.1440.10">
    <property type="entry name" value="GIY-YIG endonuclease"/>
    <property type="match status" value="1"/>
</dbReference>
<dbReference type="Gene3D" id="4.10.860.10">
    <property type="entry name" value="UVR domain"/>
    <property type="match status" value="1"/>
</dbReference>
<dbReference type="Gene3D" id="3.30.420.340">
    <property type="entry name" value="UvrC, RNAse H endonuclease domain"/>
    <property type="match status" value="1"/>
</dbReference>
<dbReference type="HAMAP" id="MF_00203">
    <property type="entry name" value="UvrC"/>
    <property type="match status" value="1"/>
</dbReference>
<dbReference type="InterPro" id="IPR000305">
    <property type="entry name" value="GIY-YIG_endonuc"/>
</dbReference>
<dbReference type="InterPro" id="IPR035901">
    <property type="entry name" value="GIY-YIG_endonuc_sf"/>
</dbReference>
<dbReference type="InterPro" id="IPR047296">
    <property type="entry name" value="GIY-YIG_UvrC_Cho"/>
</dbReference>
<dbReference type="InterPro" id="IPR003583">
    <property type="entry name" value="Hlx-hairpin-Hlx_DNA-bd_motif"/>
</dbReference>
<dbReference type="InterPro" id="IPR010994">
    <property type="entry name" value="RuvA_2-like"/>
</dbReference>
<dbReference type="InterPro" id="IPR001943">
    <property type="entry name" value="UVR_dom"/>
</dbReference>
<dbReference type="InterPro" id="IPR036876">
    <property type="entry name" value="UVR_dom_sf"/>
</dbReference>
<dbReference type="InterPro" id="IPR050066">
    <property type="entry name" value="UvrABC_protein_C"/>
</dbReference>
<dbReference type="InterPro" id="IPR004791">
    <property type="entry name" value="UvrC"/>
</dbReference>
<dbReference type="InterPro" id="IPR001162">
    <property type="entry name" value="UvrC_RNase_H_dom"/>
</dbReference>
<dbReference type="InterPro" id="IPR038476">
    <property type="entry name" value="UvrC_RNase_H_dom_sf"/>
</dbReference>
<dbReference type="NCBIfam" id="NF001824">
    <property type="entry name" value="PRK00558.1-5"/>
    <property type="match status" value="1"/>
</dbReference>
<dbReference type="NCBIfam" id="TIGR00194">
    <property type="entry name" value="uvrC"/>
    <property type="match status" value="1"/>
</dbReference>
<dbReference type="PANTHER" id="PTHR30562:SF1">
    <property type="entry name" value="UVRABC SYSTEM PROTEIN C"/>
    <property type="match status" value="1"/>
</dbReference>
<dbReference type="PANTHER" id="PTHR30562">
    <property type="entry name" value="UVRC/OXIDOREDUCTASE"/>
    <property type="match status" value="1"/>
</dbReference>
<dbReference type="Pfam" id="PF01541">
    <property type="entry name" value="GIY-YIG"/>
    <property type="match status" value="1"/>
</dbReference>
<dbReference type="Pfam" id="PF14520">
    <property type="entry name" value="HHH_5"/>
    <property type="match status" value="1"/>
</dbReference>
<dbReference type="Pfam" id="PF02151">
    <property type="entry name" value="UVR"/>
    <property type="match status" value="1"/>
</dbReference>
<dbReference type="Pfam" id="PF22920">
    <property type="entry name" value="UvrC_RNaseH"/>
    <property type="match status" value="1"/>
</dbReference>
<dbReference type="Pfam" id="PF08459">
    <property type="entry name" value="UvrC_RNaseH_dom"/>
    <property type="match status" value="1"/>
</dbReference>
<dbReference type="SMART" id="SM00465">
    <property type="entry name" value="GIYc"/>
    <property type="match status" value="1"/>
</dbReference>
<dbReference type="SMART" id="SM00278">
    <property type="entry name" value="HhH1"/>
    <property type="match status" value="2"/>
</dbReference>
<dbReference type="SUPFAM" id="SSF46600">
    <property type="entry name" value="C-terminal UvrC-binding domain of UvrB"/>
    <property type="match status" value="1"/>
</dbReference>
<dbReference type="SUPFAM" id="SSF82771">
    <property type="entry name" value="GIY-YIG endonuclease"/>
    <property type="match status" value="1"/>
</dbReference>
<dbReference type="SUPFAM" id="SSF47781">
    <property type="entry name" value="RuvA domain 2-like"/>
    <property type="match status" value="1"/>
</dbReference>
<dbReference type="PROSITE" id="PS50164">
    <property type="entry name" value="GIY_YIG"/>
    <property type="match status" value="1"/>
</dbReference>
<dbReference type="PROSITE" id="PS50151">
    <property type="entry name" value="UVR"/>
    <property type="match status" value="1"/>
</dbReference>
<dbReference type="PROSITE" id="PS50165">
    <property type="entry name" value="UVRC"/>
    <property type="match status" value="1"/>
</dbReference>
<evidence type="ECO:0000255" key="1">
    <source>
        <dbReference type="HAMAP-Rule" id="MF_00203"/>
    </source>
</evidence>
<evidence type="ECO:0000256" key="2">
    <source>
        <dbReference type="SAM" id="MobiDB-lite"/>
    </source>
</evidence>
<sequence length="678" mass="77485">MKKNISYGKHKTFPSKLNGLEKQHSLSKNERDNFPFLSNIPWDNANQGSDKNQLKGAKLIQEFVKHLPHKPGVYRMFDENGNVLYIGKARNLKKRVSNYTCEQRHNNRITRMIRATYHMEFVVTHTETEALLLEANLIKRLHPRFNVLLRDDKSFPYIIITENHRAPALYKHRGARTRKAHYFGPFASSSAVTQTINVLQRAFLLRTCTDSVLENRTRPCLLYQIKRCSAPCTHEINENDYRELVRGAKAFLSGKSQSVKNDMIQAMHKAAEDLDFEQAAVYRDRLSALSHIQSHQGINPQTIEEADVFAIAQKGGITCIQVFFFRMRQNWGNRSYFPKADPSFSRSEILASFLAQFYDDKPLPKLILLSEEIEEKTLLAEAFSLKANRKIFLSLPKQGERKTLVNHAYINAYEALGHKLAETATHTKLLQGIAEVFQLPQTPHRIEVYDNSHLMGTNAVGAMIVADQMGFLKNQYRKFNIRSTDITPGDDFGMMKEVIKRRFSRLIKEHGLPHESNSIKGEDEDCFSIWPNLILIDGGEGQINSVHTILSELKLDDFITVVGIAKGADRGAGHERFFIKGKTPFTLPPHDPILYFLQRLRDEAHRFAIKTHRIKRKKATLKNPLDEIKNIGSTRKRALLHHFGSAKIVASASLEDLTKVTGISVTIAQKIHNHFNEK</sequence>
<name>UVRC_BARQU</name>
<gene>
    <name evidence="1" type="primary">uvrC</name>
    <name type="ordered locus">BQ04710</name>
</gene>
<feature type="chain" id="PRO_0000264868" description="UvrABC system protein C">
    <location>
        <begin position="1"/>
        <end position="678"/>
    </location>
</feature>
<feature type="domain" description="GIY-YIG" evidence="1">
    <location>
        <begin position="69"/>
        <end position="147"/>
    </location>
</feature>
<feature type="domain" description="UVR" evidence="1">
    <location>
        <begin position="257"/>
        <end position="292"/>
    </location>
</feature>
<feature type="region of interest" description="Disordered" evidence="2">
    <location>
        <begin position="1"/>
        <end position="25"/>
    </location>
</feature>
<feature type="compositionally biased region" description="Basic residues" evidence="2">
    <location>
        <begin position="1"/>
        <end position="13"/>
    </location>
</feature>